<dbReference type="EMBL" id="L77117">
    <property type="protein sequence ID" value="AAB98710.1"/>
    <property type="molecule type" value="Genomic_DNA"/>
</dbReference>
<dbReference type="PIR" id="C64389">
    <property type="entry name" value="C64389"/>
</dbReference>
<dbReference type="RefSeq" id="WP_010870221.1">
    <property type="nucleotide sequence ID" value="NC_000909.1"/>
</dbReference>
<dbReference type="PDB" id="4YTE">
    <property type="method" value="X-ray"/>
    <property type="resolution" value="2.15 A"/>
    <property type="chains" value="A=1-194"/>
</dbReference>
<dbReference type="PDBsum" id="4YTE"/>
<dbReference type="SMR" id="Q58125"/>
<dbReference type="STRING" id="243232.MJ_0715"/>
<dbReference type="PaxDb" id="243232-MJ_0715"/>
<dbReference type="EnsemblBacteria" id="AAB98710">
    <property type="protein sequence ID" value="AAB98710"/>
    <property type="gene ID" value="MJ_0715"/>
</dbReference>
<dbReference type="GeneID" id="1451593"/>
<dbReference type="KEGG" id="mja:MJ_0715"/>
<dbReference type="eggNOG" id="arCOG03195">
    <property type="taxonomic scope" value="Archaea"/>
</dbReference>
<dbReference type="HOGENOM" id="CLU_069755_0_0_2"/>
<dbReference type="InParanoid" id="Q58125"/>
<dbReference type="OrthoDB" id="70340at2157"/>
<dbReference type="PhylomeDB" id="Q58125"/>
<dbReference type="EvolutionaryTrace" id="Q58125"/>
<dbReference type="Proteomes" id="UP000000805">
    <property type="component" value="Chromosome"/>
</dbReference>
<dbReference type="GO" id="GO:0016491">
    <property type="term" value="F:oxidoreductase activity"/>
    <property type="evidence" value="ECO:0007669"/>
    <property type="project" value="UniProtKB-KW"/>
</dbReference>
<dbReference type="Gene3D" id="1.20.120.1300">
    <property type="entry name" value="Hmd, C-terminal helical subdomain"/>
    <property type="match status" value="1"/>
</dbReference>
<dbReference type="Gene3D" id="3.40.50.720">
    <property type="entry name" value="NAD(P)-binding Rossmann-like Domain"/>
    <property type="match status" value="1"/>
</dbReference>
<dbReference type="InterPro" id="IPR008927">
    <property type="entry name" value="6-PGluconate_DH-like_C_sf"/>
</dbReference>
<dbReference type="InterPro" id="IPR004889">
    <property type="entry name" value="HMD_C"/>
</dbReference>
<dbReference type="InterPro" id="IPR038182">
    <property type="entry name" value="HMD_C_sf"/>
</dbReference>
<dbReference type="InterPro" id="IPR055205">
    <property type="entry name" value="HMD_N"/>
</dbReference>
<dbReference type="InterPro" id="IPR010063">
    <property type="entry name" value="HMDII/III"/>
</dbReference>
<dbReference type="InterPro" id="IPR024190">
    <property type="entry name" value="METHMP_Hmd"/>
</dbReference>
<dbReference type="InterPro" id="IPR036291">
    <property type="entry name" value="NAD(P)-bd_dom_sf"/>
</dbReference>
<dbReference type="NCBIfam" id="TIGR01724">
    <property type="entry name" value="hmd_rel"/>
    <property type="match status" value="1"/>
</dbReference>
<dbReference type="NCBIfam" id="NF009208">
    <property type="entry name" value="PRK12557.1"/>
    <property type="match status" value="1"/>
</dbReference>
<dbReference type="Pfam" id="PF03201">
    <property type="entry name" value="HMD"/>
    <property type="match status" value="1"/>
</dbReference>
<dbReference type="Pfam" id="PF22616">
    <property type="entry name" value="HMD_N"/>
    <property type="match status" value="1"/>
</dbReference>
<dbReference type="PIRSF" id="PIRSF016158">
    <property type="entry name" value="HMD"/>
    <property type="match status" value="1"/>
</dbReference>
<dbReference type="PIRSF" id="PIRSF500166">
    <property type="entry name" value="HMDII_III"/>
    <property type="match status" value="1"/>
</dbReference>
<dbReference type="SUPFAM" id="SSF48179">
    <property type="entry name" value="6-phosphogluconate dehydrogenase C-terminal domain-like"/>
    <property type="match status" value="1"/>
</dbReference>
<dbReference type="SUPFAM" id="SSF51735">
    <property type="entry name" value="NAD(P)-binding Rossmann-fold domains"/>
    <property type="match status" value="1"/>
</dbReference>
<gene>
    <name type="ordered locus">MJ0715</name>
</gene>
<accession>Q58125</accession>
<name>HMDX_METJA</name>
<sequence length="338" mass="36854">MKISIYGAGNQRLYLEQLKVPEKFGGEPPYGGAGMAIEFAKAGHDVVLSEPNRDVMSDDLWKKVEDAGVKVVSDDIEAAKHGEIHVLFTPFGRITLNIANTIIEHVPENAIICNTCTIPTPVLYRSLEGILRLKRRDVGISSMHPTGVPGTPSQKYYTIAGKALEGKEYATEDQINKLVELVKSVGKIPYVTPADVVPAVADMGALVTAVALVGVLDYYRVGTQIINAPKDMIEKQILISLQTIASIIETSGMEGLMKVFNKDALLSSAKNMLIDERQEDLNLALKIIEEFDKSTIGEKDISQTYLVAPQALIKEAVSLIGKSAVEGMIRRSSNKLFK</sequence>
<organism>
    <name type="scientific">Methanocaldococcus jannaschii (strain ATCC 43067 / DSM 2661 / JAL-1 / JCM 10045 / NBRC 100440)</name>
    <name type="common">Methanococcus jannaschii</name>
    <dbReference type="NCBI Taxonomy" id="243232"/>
    <lineage>
        <taxon>Archaea</taxon>
        <taxon>Methanobacteriati</taxon>
        <taxon>Methanobacteriota</taxon>
        <taxon>Methanomada group</taxon>
        <taxon>Methanococci</taxon>
        <taxon>Methanococcales</taxon>
        <taxon>Methanocaldococcaceae</taxon>
        <taxon>Methanocaldococcus</taxon>
    </lineage>
</organism>
<comment type="similarity">
    <text evidence="1">Belongs to the HMD family.</text>
</comment>
<reference key="1">
    <citation type="journal article" date="1996" name="Science">
        <title>Complete genome sequence of the methanogenic archaeon, Methanococcus jannaschii.</title>
        <authorList>
            <person name="Bult C.J."/>
            <person name="White O."/>
            <person name="Olsen G.J."/>
            <person name="Zhou L."/>
            <person name="Fleischmann R.D."/>
            <person name="Sutton G.G."/>
            <person name="Blake J.A."/>
            <person name="FitzGerald L.M."/>
            <person name="Clayton R.A."/>
            <person name="Gocayne J.D."/>
            <person name="Kerlavage A.R."/>
            <person name="Dougherty B.A."/>
            <person name="Tomb J.-F."/>
            <person name="Adams M.D."/>
            <person name="Reich C.I."/>
            <person name="Overbeek R."/>
            <person name="Kirkness E.F."/>
            <person name="Weinstock K.G."/>
            <person name="Merrick J.M."/>
            <person name="Glodek A."/>
            <person name="Scott J.L."/>
            <person name="Geoghagen N.S.M."/>
            <person name="Weidman J.F."/>
            <person name="Fuhrmann J.L."/>
            <person name="Nguyen D."/>
            <person name="Utterback T.R."/>
            <person name="Kelley J.M."/>
            <person name="Peterson J.D."/>
            <person name="Sadow P.W."/>
            <person name="Hanna M.C."/>
            <person name="Cotton M.D."/>
            <person name="Roberts K.M."/>
            <person name="Hurst M.A."/>
            <person name="Kaine B.P."/>
            <person name="Borodovsky M."/>
            <person name="Klenk H.-P."/>
            <person name="Fraser C.M."/>
            <person name="Smith H.O."/>
            <person name="Woese C.R."/>
            <person name="Venter J.C."/>
        </authorList>
    </citation>
    <scope>NUCLEOTIDE SEQUENCE [LARGE SCALE GENOMIC DNA]</scope>
    <source>
        <strain>ATCC 43067 / DSM 2661 / JAL-1 / JCM 10045 / NBRC 100440</strain>
    </source>
</reference>
<evidence type="ECO:0000305" key="1"/>
<evidence type="ECO:0007829" key="2">
    <source>
        <dbReference type="PDB" id="4YTE"/>
    </source>
</evidence>
<proteinExistence type="evidence at protein level"/>
<protein>
    <recommendedName>
        <fullName>H(2)-forming methylenetetrahydromethanopterin dehydrogenase-related protein MJ0715</fullName>
    </recommendedName>
</protein>
<keyword id="KW-0002">3D-structure</keyword>
<keyword id="KW-0560">Oxidoreductase</keyword>
<keyword id="KW-1185">Reference proteome</keyword>
<feature type="chain" id="PRO_0000218517" description="H(2)-forming methylenetetrahydromethanopterin dehydrogenase-related protein MJ0715">
    <location>
        <begin position="1"/>
        <end position="338"/>
    </location>
</feature>
<feature type="strand" evidence="2">
    <location>
        <begin position="2"/>
        <end position="6"/>
    </location>
</feature>
<feature type="helix" evidence="2">
    <location>
        <begin position="11"/>
        <end position="16"/>
    </location>
</feature>
<feature type="helix" evidence="2">
    <location>
        <begin position="20"/>
        <end position="23"/>
    </location>
</feature>
<feature type="helix" evidence="2">
    <location>
        <begin position="31"/>
        <end position="41"/>
    </location>
</feature>
<feature type="strand" evidence="2">
    <location>
        <begin position="45"/>
        <end position="49"/>
    </location>
</feature>
<feature type="helix" evidence="2">
    <location>
        <begin position="53"/>
        <end position="55"/>
    </location>
</feature>
<feature type="helix" evidence="2">
    <location>
        <begin position="58"/>
        <end position="66"/>
    </location>
</feature>
<feature type="strand" evidence="2">
    <location>
        <begin position="70"/>
        <end position="73"/>
    </location>
</feature>
<feature type="helix" evidence="2">
    <location>
        <begin position="75"/>
        <end position="79"/>
    </location>
</feature>
<feature type="strand" evidence="2">
    <location>
        <begin position="83"/>
        <end position="87"/>
    </location>
</feature>
<feature type="helix" evidence="2">
    <location>
        <begin position="95"/>
        <end position="102"/>
    </location>
</feature>
<feature type="turn" evidence="2">
    <location>
        <begin position="103"/>
        <end position="105"/>
    </location>
</feature>
<feature type="strand" evidence="2">
    <location>
        <begin position="111"/>
        <end position="116"/>
    </location>
</feature>
<feature type="helix" evidence="2">
    <location>
        <begin position="120"/>
        <end position="125"/>
    </location>
</feature>
<feature type="helix" evidence="2">
    <location>
        <begin position="128"/>
        <end position="133"/>
    </location>
</feature>
<feature type="strand" evidence="2">
    <location>
        <begin position="139"/>
        <end position="142"/>
    </location>
</feature>
<feature type="strand" evidence="2">
    <location>
        <begin position="144"/>
        <end position="147"/>
    </location>
</feature>
<feature type="strand" evidence="2">
    <location>
        <begin position="156"/>
        <end position="162"/>
    </location>
</feature>
<feature type="helix" evidence="2">
    <location>
        <begin position="172"/>
        <end position="184"/>
    </location>
</feature>
<feature type="strand" evidence="2">
    <location>
        <begin position="188"/>
        <end position="193"/>
    </location>
</feature>